<proteinExistence type="inferred from homology"/>
<accession>A1TYL2</accession>
<dbReference type="EMBL" id="CP000514">
    <property type="protein sequence ID" value="ABM17831.1"/>
    <property type="molecule type" value="Genomic_DNA"/>
</dbReference>
<dbReference type="RefSeq" id="WP_011784257.1">
    <property type="nucleotide sequence ID" value="NC_008740.1"/>
</dbReference>
<dbReference type="SMR" id="A1TYL2"/>
<dbReference type="STRING" id="351348.Maqu_0734"/>
<dbReference type="GeneID" id="31820109"/>
<dbReference type="KEGG" id="maq:Maqu_0734"/>
<dbReference type="eggNOG" id="COG0097">
    <property type="taxonomic scope" value="Bacteria"/>
</dbReference>
<dbReference type="HOGENOM" id="CLU_065464_1_2_6"/>
<dbReference type="OrthoDB" id="9805007at2"/>
<dbReference type="Proteomes" id="UP000000998">
    <property type="component" value="Chromosome"/>
</dbReference>
<dbReference type="GO" id="GO:0022625">
    <property type="term" value="C:cytosolic large ribosomal subunit"/>
    <property type="evidence" value="ECO:0007669"/>
    <property type="project" value="TreeGrafter"/>
</dbReference>
<dbReference type="GO" id="GO:0019843">
    <property type="term" value="F:rRNA binding"/>
    <property type="evidence" value="ECO:0007669"/>
    <property type="project" value="UniProtKB-UniRule"/>
</dbReference>
<dbReference type="GO" id="GO:0003735">
    <property type="term" value="F:structural constituent of ribosome"/>
    <property type="evidence" value="ECO:0007669"/>
    <property type="project" value="InterPro"/>
</dbReference>
<dbReference type="GO" id="GO:0002181">
    <property type="term" value="P:cytoplasmic translation"/>
    <property type="evidence" value="ECO:0007669"/>
    <property type="project" value="TreeGrafter"/>
</dbReference>
<dbReference type="FunFam" id="3.90.930.12:FF:000001">
    <property type="entry name" value="50S ribosomal protein L6"/>
    <property type="match status" value="1"/>
</dbReference>
<dbReference type="FunFam" id="3.90.930.12:FF:000002">
    <property type="entry name" value="50S ribosomal protein L6"/>
    <property type="match status" value="1"/>
</dbReference>
<dbReference type="Gene3D" id="3.90.930.12">
    <property type="entry name" value="Ribosomal protein L6, alpha-beta domain"/>
    <property type="match status" value="2"/>
</dbReference>
<dbReference type="HAMAP" id="MF_01365_B">
    <property type="entry name" value="Ribosomal_uL6_B"/>
    <property type="match status" value="1"/>
</dbReference>
<dbReference type="InterPro" id="IPR000702">
    <property type="entry name" value="Ribosomal_uL6-like"/>
</dbReference>
<dbReference type="InterPro" id="IPR036789">
    <property type="entry name" value="Ribosomal_uL6-like_a/b-dom_sf"/>
</dbReference>
<dbReference type="InterPro" id="IPR020040">
    <property type="entry name" value="Ribosomal_uL6_a/b-dom"/>
</dbReference>
<dbReference type="InterPro" id="IPR019906">
    <property type="entry name" value="Ribosomal_uL6_bac-type"/>
</dbReference>
<dbReference type="InterPro" id="IPR002358">
    <property type="entry name" value="Ribosomal_uL6_CS"/>
</dbReference>
<dbReference type="NCBIfam" id="TIGR03654">
    <property type="entry name" value="L6_bact"/>
    <property type="match status" value="1"/>
</dbReference>
<dbReference type="PANTHER" id="PTHR11655">
    <property type="entry name" value="60S/50S RIBOSOMAL PROTEIN L6/L9"/>
    <property type="match status" value="1"/>
</dbReference>
<dbReference type="PANTHER" id="PTHR11655:SF14">
    <property type="entry name" value="LARGE RIBOSOMAL SUBUNIT PROTEIN UL6M"/>
    <property type="match status" value="1"/>
</dbReference>
<dbReference type="Pfam" id="PF00347">
    <property type="entry name" value="Ribosomal_L6"/>
    <property type="match status" value="2"/>
</dbReference>
<dbReference type="PIRSF" id="PIRSF002162">
    <property type="entry name" value="Ribosomal_L6"/>
    <property type="match status" value="1"/>
</dbReference>
<dbReference type="PRINTS" id="PR00059">
    <property type="entry name" value="RIBOSOMALL6"/>
</dbReference>
<dbReference type="SUPFAM" id="SSF56053">
    <property type="entry name" value="Ribosomal protein L6"/>
    <property type="match status" value="2"/>
</dbReference>
<dbReference type="PROSITE" id="PS00525">
    <property type="entry name" value="RIBOSOMAL_L6_1"/>
    <property type="match status" value="1"/>
</dbReference>
<feature type="chain" id="PRO_1000055256" description="Large ribosomal subunit protein uL6">
    <location>
        <begin position="1"/>
        <end position="177"/>
    </location>
</feature>
<feature type="region of interest" description="Disordered" evidence="2">
    <location>
        <begin position="154"/>
        <end position="177"/>
    </location>
</feature>
<feature type="compositionally biased region" description="Basic and acidic residues" evidence="2">
    <location>
        <begin position="154"/>
        <end position="171"/>
    </location>
</feature>
<evidence type="ECO:0000255" key="1">
    <source>
        <dbReference type="HAMAP-Rule" id="MF_01365"/>
    </source>
</evidence>
<evidence type="ECO:0000256" key="2">
    <source>
        <dbReference type="SAM" id="MobiDB-lite"/>
    </source>
</evidence>
<evidence type="ECO:0000305" key="3"/>
<comment type="function">
    <text evidence="1">This protein binds to the 23S rRNA, and is important in its secondary structure. It is located near the subunit interface in the base of the L7/L12 stalk, and near the tRNA binding site of the peptidyltransferase center.</text>
</comment>
<comment type="subunit">
    <text evidence="1">Part of the 50S ribosomal subunit.</text>
</comment>
<comment type="similarity">
    <text evidence="1">Belongs to the universal ribosomal protein uL6 family.</text>
</comment>
<reference key="1">
    <citation type="journal article" date="2011" name="Appl. Environ. Microbiol.">
        <title>Genomic potential of Marinobacter aquaeolei, a biogeochemical 'opportunitroph'.</title>
        <authorList>
            <person name="Singer E."/>
            <person name="Webb E.A."/>
            <person name="Nelson W.C."/>
            <person name="Heidelberg J.F."/>
            <person name="Ivanova N."/>
            <person name="Pati A."/>
            <person name="Edwards K.J."/>
        </authorList>
    </citation>
    <scope>NUCLEOTIDE SEQUENCE [LARGE SCALE GENOMIC DNA]</scope>
    <source>
        <strain>ATCC 700491 / DSM 11845 / VT8</strain>
    </source>
</reference>
<organism>
    <name type="scientific">Marinobacter nauticus (strain ATCC 700491 / DSM 11845 / VT8)</name>
    <name type="common">Marinobacter aquaeolei</name>
    <dbReference type="NCBI Taxonomy" id="351348"/>
    <lineage>
        <taxon>Bacteria</taxon>
        <taxon>Pseudomonadati</taxon>
        <taxon>Pseudomonadota</taxon>
        <taxon>Gammaproteobacteria</taxon>
        <taxon>Pseudomonadales</taxon>
        <taxon>Marinobacteraceae</taxon>
        <taxon>Marinobacter</taxon>
    </lineage>
</organism>
<protein>
    <recommendedName>
        <fullName evidence="1">Large ribosomal subunit protein uL6</fullName>
    </recommendedName>
    <alternativeName>
        <fullName evidence="3">50S ribosomal protein L6</fullName>
    </alternativeName>
</protein>
<keyword id="KW-0687">Ribonucleoprotein</keyword>
<keyword id="KW-0689">Ribosomal protein</keyword>
<keyword id="KW-0694">RNA-binding</keyword>
<keyword id="KW-0699">rRNA-binding</keyword>
<gene>
    <name evidence="1" type="primary">rplF</name>
    <name type="ordered locus">Maqu_0734</name>
</gene>
<sequence length="177" mass="19363">MSRVANNPVVLPSGVEVKLNGQEINVKGSKGALQFTIHQAVEVKQEENVLRFAARDGAKQSRALAGTTRALVNNMVTGVSTGWERKLQLTGVGYRAQAQGKKLNLTLGFSHPVEYELPEGVTAETPSNTEVVIRGIDKQQVGQVAAEIRAFRPPEPYKGKGVRYADEQVRRKEAKKK</sequence>
<name>RL6_MARN8</name>